<organism>
    <name type="scientific">Pseudomonas paraeruginosa (strain DSM 24068 / PA7)</name>
    <name type="common">Pseudomonas aeruginosa (strain PA7)</name>
    <dbReference type="NCBI Taxonomy" id="381754"/>
    <lineage>
        <taxon>Bacteria</taxon>
        <taxon>Pseudomonadati</taxon>
        <taxon>Pseudomonadota</taxon>
        <taxon>Gammaproteobacteria</taxon>
        <taxon>Pseudomonadales</taxon>
        <taxon>Pseudomonadaceae</taxon>
        <taxon>Pseudomonas</taxon>
        <taxon>Pseudomonas paraeruginosa</taxon>
    </lineage>
</organism>
<proteinExistence type="inferred from homology"/>
<gene>
    <name evidence="1" type="primary">rplW</name>
    <name type="ordered locus">PSPA7_0839</name>
</gene>
<comment type="function">
    <text evidence="1">One of the early assembly proteins it binds 23S rRNA. One of the proteins that surrounds the polypeptide exit tunnel on the outside of the ribosome. Forms the main docking site for trigger factor binding to the ribosome.</text>
</comment>
<comment type="subunit">
    <text evidence="1">Part of the 50S ribosomal subunit. Contacts protein L29, and trigger factor when it is bound to the ribosome.</text>
</comment>
<comment type="similarity">
    <text evidence="1">Belongs to the universal ribosomal protein uL23 family.</text>
</comment>
<evidence type="ECO:0000255" key="1">
    <source>
        <dbReference type="HAMAP-Rule" id="MF_01369"/>
    </source>
</evidence>
<evidence type="ECO:0000305" key="2"/>
<reference key="1">
    <citation type="submission" date="2007-06" db="EMBL/GenBank/DDBJ databases">
        <authorList>
            <person name="Dodson R.J."/>
            <person name="Harkins D."/>
            <person name="Paulsen I.T."/>
        </authorList>
    </citation>
    <scope>NUCLEOTIDE SEQUENCE [LARGE SCALE GENOMIC DNA]</scope>
    <source>
        <strain>DSM 24068 / PA7</strain>
    </source>
</reference>
<feature type="chain" id="PRO_1000068138" description="Large ribosomal subunit protein uL23">
    <location>
        <begin position="1"/>
        <end position="99"/>
    </location>
</feature>
<name>RL23_PSEP7</name>
<accession>A6UZJ0</accession>
<dbReference type="EMBL" id="CP000744">
    <property type="protein sequence ID" value="ABR85852.1"/>
    <property type="molecule type" value="Genomic_DNA"/>
</dbReference>
<dbReference type="RefSeq" id="WP_003093736.1">
    <property type="nucleotide sequence ID" value="NC_009656.1"/>
</dbReference>
<dbReference type="SMR" id="A6UZJ0"/>
<dbReference type="GeneID" id="77219200"/>
<dbReference type="KEGG" id="pap:PSPA7_0839"/>
<dbReference type="HOGENOM" id="CLU_037562_3_1_6"/>
<dbReference type="Proteomes" id="UP000001582">
    <property type="component" value="Chromosome"/>
</dbReference>
<dbReference type="GO" id="GO:1990904">
    <property type="term" value="C:ribonucleoprotein complex"/>
    <property type="evidence" value="ECO:0007669"/>
    <property type="project" value="UniProtKB-KW"/>
</dbReference>
<dbReference type="GO" id="GO:0005840">
    <property type="term" value="C:ribosome"/>
    <property type="evidence" value="ECO:0007669"/>
    <property type="project" value="UniProtKB-KW"/>
</dbReference>
<dbReference type="GO" id="GO:0019843">
    <property type="term" value="F:rRNA binding"/>
    <property type="evidence" value="ECO:0007669"/>
    <property type="project" value="UniProtKB-UniRule"/>
</dbReference>
<dbReference type="GO" id="GO:0003735">
    <property type="term" value="F:structural constituent of ribosome"/>
    <property type="evidence" value="ECO:0007669"/>
    <property type="project" value="InterPro"/>
</dbReference>
<dbReference type="GO" id="GO:0006412">
    <property type="term" value="P:translation"/>
    <property type="evidence" value="ECO:0007669"/>
    <property type="project" value="UniProtKB-UniRule"/>
</dbReference>
<dbReference type="FunFam" id="3.30.70.330:FF:000001">
    <property type="entry name" value="50S ribosomal protein L23"/>
    <property type="match status" value="1"/>
</dbReference>
<dbReference type="Gene3D" id="3.30.70.330">
    <property type="match status" value="1"/>
</dbReference>
<dbReference type="HAMAP" id="MF_01369_B">
    <property type="entry name" value="Ribosomal_uL23_B"/>
    <property type="match status" value="1"/>
</dbReference>
<dbReference type="InterPro" id="IPR012677">
    <property type="entry name" value="Nucleotide-bd_a/b_plait_sf"/>
</dbReference>
<dbReference type="InterPro" id="IPR013025">
    <property type="entry name" value="Ribosomal_uL23-like"/>
</dbReference>
<dbReference type="InterPro" id="IPR012678">
    <property type="entry name" value="Ribosomal_uL23/eL15/eS24_sf"/>
</dbReference>
<dbReference type="NCBIfam" id="NF004359">
    <property type="entry name" value="PRK05738.1-3"/>
    <property type="match status" value="1"/>
</dbReference>
<dbReference type="NCBIfam" id="NF004363">
    <property type="entry name" value="PRK05738.2-4"/>
    <property type="match status" value="1"/>
</dbReference>
<dbReference type="PANTHER" id="PTHR11620">
    <property type="entry name" value="60S RIBOSOMAL PROTEIN L23A"/>
    <property type="match status" value="1"/>
</dbReference>
<dbReference type="Pfam" id="PF00276">
    <property type="entry name" value="Ribosomal_L23"/>
    <property type="match status" value="1"/>
</dbReference>
<dbReference type="SUPFAM" id="SSF54189">
    <property type="entry name" value="Ribosomal proteins S24e, L23 and L15e"/>
    <property type="match status" value="1"/>
</dbReference>
<protein>
    <recommendedName>
        <fullName evidence="1">Large ribosomal subunit protein uL23</fullName>
    </recommendedName>
    <alternativeName>
        <fullName evidence="2">50S ribosomal protein L23</fullName>
    </alternativeName>
</protein>
<sequence>MNQERVFKVLLGPHISEKATGLADGKSQFVFKVATDATKLEIKKAVESLFSVKVQRVTTLNVKGKTKRTARGLGKRNDWKKAYIALQPGQDLDFATSAE</sequence>
<keyword id="KW-0687">Ribonucleoprotein</keyword>
<keyword id="KW-0689">Ribosomal protein</keyword>
<keyword id="KW-0694">RNA-binding</keyword>
<keyword id="KW-0699">rRNA-binding</keyword>